<evidence type="ECO:0000250" key="1"/>
<evidence type="ECO:0000255" key="2"/>
<evidence type="ECO:0000305" key="3"/>
<name>SURF1_DICDI</name>
<organism>
    <name type="scientific">Dictyostelium discoideum</name>
    <name type="common">Social amoeba</name>
    <dbReference type="NCBI Taxonomy" id="44689"/>
    <lineage>
        <taxon>Eukaryota</taxon>
        <taxon>Amoebozoa</taxon>
        <taxon>Evosea</taxon>
        <taxon>Eumycetozoa</taxon>
        <taxon>Dictyostelia</taxon>
        <taxon>Dictyosteliales</taxon>
        <taxon>Dictyosteliaceae</taxon>
        <taxon>Dictyostelium</taxon>
    </lineage>
</organism>
<protein>
    <recommendedName>
        <fullName>SURF1-like protein</fullName>
    </recommendedName>
</protein>
<sequence length="270" mass="31623">MNKNKKGFKLFFIFPVIAFGLGTWQVYRYDWKKRLIQRAKDRMEEDPIELSNSFIKNFKGSSFGDLNKYEFRRVYLNGKVIDNQYVLLGPRSIDGTLGYYVISPLQLSDGTRILLNRGWSASTPKSNYKIPYAIEELKLIHQKEKEQGQQQGNQESILYRYFNILGVISKTKERGSAFTPTNQPEKGQWYSLDVDAMADQLNTEPLMINTMDETEINSKPSSLPNPQFKRFDNDVESSFHNKHMSYIGTWYTLSASLFFIYFRYMRKLPK</sequence>
<proteinExistence type="inferred from homology"/>
<reference key="1">
    <citation type="journal article" date="2002" name="Nature">
        <title>Sequence and analysis of chromosome 2 of Dictyostelium discoideum.</title>
        <authorList>
            <person name="Gloeckner G."/>
            <person name="Eichinger L."/>
            <person name="Szafranski K."/>
            <person name="Pachebat J.A."/>
            <person name="Bankier A.T."/>
            <person name="Dear P.H."/>
            <person name="Lehmann R."/>
            <person name="Baumgart C."/>
            <person name="Parra G."/>
            <person name="Abril J.F."/>
            <person name="Guigo R."/>
            <person name="Kumpf K."/>
            <person name="Tunggal B."/>
            <person name="Cox E.C."/>
            <person name="Quail M.A."/>
            <person name="Platzer M."/>
            <person name="Rosenthal A."/>
            <person name="Noegel A.A."/>
        </authorList>
    </citation>
    <scope>NUCLEOTIDE SEQUENCE [LARGE SCALE GENOMIC DNA]</scope>
    <source>
        <strain>AX4</strain>
    </source>
</reference>
<reference key="2">
    <citation type="journal article" date="2005" name="Nature">
        <title>The genome of the social amoeba Dictyostelium discoideum.</title>
        <authorList>
            <person name="Eichinger L."/>
            <person name="Pachebat J.A."/>
            <person name="Gloeckner G."/>
            <person name="Rajandream M.A."/>
            <person name="Sucgang R."/>
            <person name="Berriman M."/>
            <person name="Song J."/>
            <person name="Olsen R."/>
            <person name="Szafranski K."/>
            <person name="Xu Q."/>
            <person name="Tunggal B."/>
            <person name="Kummerfeld S."/>
            <person name="Madera M."/>
            <person name="Konfortov B.A."/>
            <person name="Rivero F."/>
            <person name="Bankier A.T."/>
            <person name="Lehmann R."/>
            <person name="Hamlin N."/>
            <person name="Davies R."/>
            <person name="Gaudet P."/>
            <person name="Fey P."/>
            <person name="Pilcher K."/>
            <person name="Chen G."/>
            <person name="Saunders D."/>
            <person name="Sodergren E.J."/>
            <person name="Davis P."/>
            <person name="Kerhornou A."/>
            <person name="Nie X."/>
            <person name="Hall N."/>
            <person name="Anjard C."/>
            <person name="Hemphill L."/>
            <person name="Bason N."/>
            <person name="Farbrother P."/>
            <person name="Desany B."/>
            <person name="Just E."/>
            <person name="Morio T."/>
            <person name="Rost R."/>
            <person name="Churcher C.M."/>
            <person name="Cooper J."/>
            <person name="Haydock S."/>
            <person name="van Driessche N."/>
            <person name="Cronin A."/>
            <person name="Goodhead I."/>
            <person name="Muzny D.M."/>
            <person name="Mourier T."/>
            <person name="Pain A."/>
            <person name="Lu M."/>
            <person name="Harper D."/>
            <person name="Lindsay R."/>
            <person name="Hauser H."/>
            <person name="James K.D."/>
            <person name="Quiles M."/>
            <person name="Madan Babu M."/>
            <person name="Saito T."/>
            <person name="Buchrieser C."/>
            <person name="Wardroper A."/>
            <person name="Felder M."/>
            <person name="Thangavelu M."/>
            <person name="Johnson D."/>
            <person name="Knights A."/>
            <person name="Loulseged H."/>
            <person name="Mungall K.L."/>
            <person name="Oliver K."/>
            <person name="Price C."/>
            <person name="Quail M.A."/>
            <person name="Urushihara H."/>
            <person name="Hernandez J."/>
            <person name="Rabbinowitsch E."/>
            <person name="Steffen D."/>
            <person name="Sanders M."/>
            <person name="Ma J."/>
            <person name="Kohara Y."/>
            <person name="Sharp S."/>
            <person name="Simmonds M.N."/>
            <person name="Spiegler S."/>
            <person name="Tivey A."/>
            <person name="Sugano S."/>
            <person name="White B."/>
            <person name="Walker D."/>
            <person name="Woodward J.R."/>
            <person name="Winckler T."/>
            <person name="Tanaka Y."/>
            <person name="Shaulsky G."/>
            <person name="Schleicher M."/>
            <person name="Weinstock G.M."/>
            <person name="Rosenthal A."/>
            <person name="Cox E.C."/>
            <person name="Chisholm R.L."/>
            <person name="Gibbs R.A."/>
            <person name="Loomis W.F."/>
            <person name="Platzer M."/>
            <person name="Kay R.R."/>
            <person name="Williams J.G."/>
            <person name="Dear P.H."/>
            <person name="Noegel A.A."/>
            <person name="Barrell B.G."/>
            <person name="Kuspa A."/>
        </authorList>
    </citation>
    <scope>NUCLEOTIDE SEQUENCE [LARGE SCALE GENOMIC DNA]</scope>
    <source>
        <strain>AX4</strain>
    </source>
</reference>
<comment type="function">
    <text evidence="1">Probably involved in the biogenesis of the COX complex.</text>
</comment>
<comment type="subcellular location">
    <subcellularLocation>
        <location evidence="1">Mitochondrion inner membrane</location>
        <topology evidence="1">Multi-pass membrane protein</topology>
    </subcellularLocation>
</comment>
<comment type="similarity">
    <text evidence="3">Belongs to the SURF1 family.</text>
</comment>
<comment type="caution">
    <text evidence="3">The gene for this protein is duplicated in strains AX3 and AX4. These strains contain a duplication of a segment of 750 kb of chromosome 2 compared to the corresponding sequence in strain AX2.</text>
</comment>
<dbReference type="EMBL" id="AAFI02000011">
    <property type="protein sequence ID" value="EAL70434.2"/>
    <property type="molecule type" value="Genomic_DNA"/>
</dbReference>
<dbReference type="EMBL" id="AAFI02000009">
    <property type="protein sequence ID" value="EAL71082.2"/>
    <property type="molecule type" value="Genomic_DNA"/>
</dbReference>
<dbReference type="RefSeq" id="XP_644359.2">
    <property type="nucleotide sequence ID" value="XM_639267.2"/>
</dbReference>
<dbReference type="RefSeq" id="XP_645055.2">
    <property type="nucleotide sequence ID" value="XM_639963.2"/>
</dbReference>
<dbReference type="SMR" id="Q556J9"/>
<dbReference type="FunCoup" id="Q556J9">
    <property type="interactions" value="302"/>
</dbReference>
<dbReference type="STRING" id="44689.Q556J9"/>
<dbReference type="PaxDb" id="44689-DDB0238783"/>
<dbReference type="EnsemblProtists" id="EAL70434">
    <property type="protein sequence ID" value="EAL70434"/>
    <property type="gene ID" value="DDB_G0274001"/>
</dbReference>
<dbReference type="EnsemblProtists" id="EAL71082">
    <property type="protein sequence ID" value="EAL71082"/>
    <property type="gene ID" value="DDB_G0272889"/>
</dbReference>
<dbReference type="GeneID" id="8618730"/>
<dbReference type="GeneID" id="8619246"/>
<dbReference type="KEGG" id="ddi:DDB_G0272889"/>
<dbReference type="KEGG" id="ddi:DDB_G0274001"/>
<dbReference type="dictyBase" id="DDB_G0272889">
    <property type="gene designation" value="surf1-1"/>
</dbReference>
<dbReference type="dictyBase" id="DDB_G0274001">
    <property type="gene designation" value="surf1-2"/>
</dbReference>
<dbReference type="VEuPathDB" id="AmoebaDB:DDB_G0274001"/>
<dbReference type="eggNOG" id="KOG1563">
    <property type="taxonomic scope" value="Eukaryota"/>
</dbReference>
<dbReference type="HOGENOM" id="CLU_047737_4_2_1"/>
<dbReference type="InParanoid" id="Q556J9"/>
<dbReference type="OMA" id="WYSRDVA"/>
<dbReference type="PhylomeDB" id="Q556J9"/>
<dbReference type="PRO" id="PR:Q556J9"/>
<dbReference type="Proteomes" id="UP000002195">
    <property type="component" value="Chromosome 2"/>
</dbReference>
<dbReference type="GO" id="GO:0005743">
    <property type="term" value="C:mitochondrial inner membrane"/>
    <property type="evidence" value="ECO:0007669"/>
    <property type="project" value="UniProtKB-SubCell"/>
</dbReference>
<dbReference type="CDD" id="cd06662">
    <property type="entry name" value="SURF1"/>
    <property type="match status" value="1"/>
</dbReference>
<dbReference type="InterPro" id="IPR002994">
    <property type="entry name" value="Surf1/Shy1"/>
</dbReference>
<dbReference type="InterPro" id="IPR045214">
    <property type="entry name" value="Surf1/Surf4"/>
</dbReference>
<dbReference type="PANTHER" id="PTHR23427">
    <property type="entry name" value="SURFEIT LOCUS PROTEIN"/>
    <property type="match status" value="1"/>
</dbReference>
<dbReference type="PANTHER" id="PTHR23427:SF2">
    <property type="entry name" value="SURFEIT LOCUS PROTEIN 1"/>
    <property type="match status" value="1"/>
</dbReference>
<dbReference type="Pfam" id="PF02104">
    <property type="entry name" value="SURF1"/>
    <property type="match status" value="1"/>
</dbReference>
<dbReference type="PROSITE" id="PS50895">
    <property type="entry name" value="SURF1"/>
    <property type="match status" value="1"/>
</dbReference>
<feature type="chain" id="PRO_0000344501" description="SURF1-like protein">
    <location>
        <begin position="1"/>
        <end position="270"/>
    </location>
</feature>
<feature type="transmembrane region" description="Helical" evidence="2">
    <location>
        <begin position="7"/>
        <end position="29"/>
    </location>
</feature>
<feature type="transmembrane region" description="Helical" evidence="2">
    <location>
        <begin position="246"/>
        <end position="265"/>
    </location>
</feature>
<accession>Q556J9</accession>
<accession>Q86K06</accession>
<keyword id="KW-0472">Membrane</keyword>
<keyword id="KW-0496">Mitochondrion</keyword>
<keyword id="KW-0999">Mitochondrion inner membrane</keyword>
<keyword id="KW-1185">Reference proteome</keyword>
<keyword id="KW-0812">Transmembrane</keyword>
<keyword id="KW-1133">Transmembrane helix</keyword>
<gene>
    <name type="primary">surf1-1</name>
    <name type="ORF">DDB_G0272889</name>
</gene>
<gene>
    <name type="primary">surf1-2</name>
    <name type="ORF">DDB_G0274001</name>
</gene>